<name>RL20_CLOAB</name>
<evidence type="ECO:0000255" key="1">
    <source>
        <dbReference type="HAMAP-Rule" id="MF_00382"/>
    </source>
</evidence>
<evidence type="ECO:0000305" key="2"/>
<gene>
    <name evidence="1" type="primary">rplT</name>
    <name type="ordered locus">CA_C2359</name>
</gene>
<keyword id="KW-1185">Reference proteome</keyword>
<keyword id="KW-0687">Ribonucleoprotein</keyword>
<keyword id="KW-0689">Ribosomal protein</keyword>
<keyword id="KW-0694">RNA-binding</keyword>
<keyword id="KW-0699">rRNA-binding</keyword>
<protein>
    <recommendedName>
        <fullName evidence="1">Large ribosomal subunit protein bL20</fullName>
    </recommendedName>
    <alternativeName>
        <fullName evidence="2">50S ribosomal protein L20</fullName>
    </alternativeName>
</protein>
<organism>
    <name type="scientific">Clostridium acetobutylicum (strain ATCC 824 / DSM 792 / JCM 1419 / IAM 19013 / LMG 5710 / NBRC 13948 / NRRL B-527 / VKM B-1787 / 2291 / W)</name>
    <dbReference type="NCBI Taxonomy" id="272562"/>
    <lineage>
        <taxon>Bacteria</taxon>
        <taxon>Bacillati</taxon>
        <taxon>Bacillota</taxon>
        <taxon>Clostridia</taxon>
        <taxon>Eubacteriales</taxon>
        <taxon>Clostridiaceae</taxon>
        <taxon>Clostridium</taxon>
    </lineage>
</organism>
<accession>Q97GK7</accession>
<proteinExistence type="inferred from homology"/>
<dbReference type="EMBL" id="AE001437">
    <property type="protein sequence ID" value="AAK80315.1"/>
    <property type="molecule type" value="Genomic_DNA"/>
</dbReference>
<dbReference type="PIR" id="H97190">
    <property type="entry name" value="H97190"/>
</dbReference>
<dbReference type="RefSeq" id="NP_348975.1">
    <property type="nucleotide sequence ID" value="NC_003030.1"/>
</dbReference>
<dbReference type="RefSeq" id="WP_010965656.1">
    <property type="nucleotide sequence ID" value="NC_003030.1"/>
</dbReference>
<dbReference type="SMR" id="Q97GK7"/>
<dbReference type="STRING" id="272562.CA_C2359"/>
<dbReference type="GeneID" id="44998834"/>
<dbReference type="KEGG" id="cac:CA_C2359"/>
<dbReference type="PATRIC" id="fig|272562.8.peg.2555"/>
<dbReference type="eggNOG" id="COG0292">
    <property type="taxonomic scope" value="Bacteria"/>
</dbReference>
<dbReference type="HOGENOM" id="CLU_123265_0_1_9"/>
<dbReference type="OrthoDB" id="9808966at2"/>
<dbReference type="Proteomes" id="UP000000814">
    <property type="component" value="Chromosome"/>
</dbReference>
<dbReference type="GO" id="GO:1990904">
    <property type="term" value="C:ribonucleoprotein complex"/>
    <property type="evidence" value="ECO:0007669"/>
    <property type="project" value="UniProtKB-KW"/>
</dbReference>
<dbReference type="GO" id="GO:0005840">
    <property type="term" value="C:ribosome"/>
    <property type="evidence" value="ECO:0007669"/>
    <property type="project" value="UniProtKB-KW"/>
</dbReference>
<dbReference type="GO" id="GO:0019843">
    <property type="term" value="F:rRNA binding"/>
    <property type="evidence" value="ECO:0007669"/>
    <property type="project" value="UniProtKB-UniRule"/>
</dbReference>
<dbReference type="GO" id="GO:0003735">
    <property type="term" value="F:structural constituent of ribosome"/>
    <property type="evidence" value="ECO:0007669"/>
    <property type="project" value="InterPro"/>
</dbReference>
<dbReference type="GO" id="GO:0000027">
    <property type="term" value="P:ribosomal large subunit assembly"/>
    <property type="evidence" value="ECO:0007669"/>
    <property type="project" value="UniProtKB-UniRule"/>
</dbReference>
<dbReference type="GO" id="GO:0006412">
    <property type="term" value="P:translation"/>
    <property type="evidence" value="ECO:0007669"/>
    <property type="project" value="InterPro"/>
</dbReference>
<dbReference type="CDD" id="cd07026">
    <property type="entry name" value="Ribosomal_L20"/>
    <property type="match status" value="1"/>
</dbReference>
<dbReference type="FunFam" id="1.10.1900.20:FF:000001">
    <property type="entry name" value="50S ribosomal protein L20"/>
    <property type="match status" value="1"/>
</dbReference>
<dbReference type="Gene3D" id="6.10.160.10">
    <property type="match status" value="1"/>
</dbReference>
<dbReference type="Gene3D" id="1.10.1900.20">
    <property type="entry name" value="Ribosomal protein L20"/>
    <property type="match status" value="1"/>
</dbReference>
<dbReference type="HAMAP" id="MF_00382">
    <property type="entry name" value="Ribosomal_bL20"/>
    <property type="match status" value="1"/>
</dbReference>
<dbReference type="InterPro" id="IPR005813">
    <property type="entry name" value="Ribosomal_bL20"/>
</dbReference>
<dbReference type="InterPro" id="IPR049946">
    <property type="entry name" value="RIBOSOMAL_L20_CS"/>
</dbReference>
<dbReference type="InterPro" id="IPR035566">
    <property type="entry name" value="Ribosomal_protein_bL20_C"/>
</dbReference>
<dbReference type="NCBIfam" id="TIGR01032">
    <property type="entry name" value="rplT_bact"/>
    <property type="match status" value="1"/>
</dbReference>
<dbReference type="PANTHER" id="PTHR10986">
    <property type="entry name" value="39S RIBOSOMAL PROTEIN L20"/>
    <property type="match status" value="1"/>
</dbReference>
<dbReference type="Pfam" id="PF00453">
    <property type="entry name" value="Ribosomal_L20"/>
    <property type="match status" value="1"/>
</dbReference>
<dbReference type="PRINTS" id="PR00062">
    <property type="entry name" value="RIBOSOMALL20"/>
</dbReference>
<dbReference type="SUPFAM" id="SSF74731">
    <property type="entry name" value="Ribosomal protein L20"/>
    <property type="match status" value="1"/>
</dbReference>
<dbReference type="PROSITE" id="PS00937">
    <property type="entry name" value="RIBOSOMAL_L20"/>
    <property type="match status" value="1"/>
</dbReference>
<feature type="chain" id="PRO_0000177146" description="Large ribosomal subunit protein bL20">
    <location>
        <begin position="1"/>
        <end position="119"/>
    </location>
</feature>
<sequence length="119" mass="13589">MARVKRAVNARKNHRKVLKLAKGYYGGKSKLFKTANESVIRALRNAYVGRRLRKRDFRKLWIARINAATRINGLSYSKFINGIKLAGIDMNRKMLSEIAINDPKAFSELVEVAKKQINA</sequence>
<reference key="1">
    <citation type="journal article" date="2001" name="J. Bacteriol.">
        <title>Genome sequence and comparative analysis of the solvent-producing bacterium Clostridium acetobutylicum.</title>
        <authorList>
            <person name="Noelling J."/>
            <person name="Breton G."/>
            <person name="Omelchenko M.V."/>
            <person name="Makarova K.S."/>
            <person name="Zeng Q."/>
            <person name="Gibson R."/>
            <person name="Lee H.M."/>
            <person name="Dubois J."/>
            <person name="Qiu D."/>
            <person name="Hitti J."/>
            <person name="Wolf Y.I."/>
            <person name="Tatusov R.L."/>
            <person name="Sabathe F."/>
            <person name="Doucette-Stamm L.A."/>
            <person name="Soucaille P."/>
            <person name="Daly M.J."/>
            <person name="Bennett G.N."/>
            <person name="Koonin E.V."/>
            <person name="Smith D.R."/>
        </authorList>
    </citation>
    <scope>NUCLEOTIDE SEQUENCE [LARGE SCALE GENOMIC DNA]</scope>
    <source>
        <strain>ATCC 824 / DSM 792 / JCM 1419 / IAM 19013 / LMG 5710 / NBRC 13948 / NRRL B-527 / VKM B-1787 / 2291 / W</strain>
    </source>
</reference>
<comment type="function">
    <text evidence="1">Binds directly to 23S ribosomal RNA and is necessary for the in vitro assembly process of the 50S ribosomal subunit. It is not involved in the protein synthesizing functions of that subunit.</text>
</comment>
<comment type="similarity">
    <text evidence="1">Belongs to the bacterial ribosomal protein bL20 family.</text>
</comment>